<accession>A8LM82</accession>
<feature type="chain" id="PRO_1000087170" description="Large ribosomal subunit protein bL17">
    <location>
        <begin position="1"/>
        <end position="138"/>
    </location>
</feature>
<evidence type="ECO:0000255" key="1">
    <source>
        <dbReference type="HAMAP-Rule" id="MF_01368"/>
    </source>
</evidence>
<evidence type="ECO:0000305" key="2"/>
<gene>
    <name evidence="1" type="primary">rplQ</name>
    <name type="ordered locus">Dshi_0310</name>
</gene>
<name>RL17_DINSH</name>
<proteinExistence type="inferred from homology"/>
<organism>
    <name type="scientific">Dinoroseobacter shibae (strain DSM 16493 / NCIMB 14021 / DFL 12)</name>
    <dbReference type="NCBI Taxonomy" id="398580"/>
    <lineage>
        <taxon>Bacteria</taxon>
        <taxon>Pseudomonadati</taxon>
        <taxon>Pseudomonadota</taxon>
        <taxon>Alphaproteobacteria</taxon>
        <taxon>Rhodobacterales</taxon>
        <taxon>Roseobacteraceae</taxon>
        <taxon>Dinoroseobacter</taxon>
    </lineage>
</organism>
<comment type="subunit">
    <text evidence="1">Part of the 50S ribosomal subunit. Contacts protein L32.</text>
</comment>
<comment type="similarity">
    <text evidence="1">Belongs to the bacterial ribosomal protein bL17 family.</text>
</comment>
<dbReference type="EMBL" id="CP000830">
    <property type="protein sequence ID" value="ABV92059.1"/>
    <property type="molecule type" value="Genomic_DNA"/>
</dbReference>
<dbReference type="RefSeq" id="WP_012176989.1">
    <property type="nucleotide sequence ID" value="NC_009952.1"/>
</dbReference>
<dbReference type="SMR" id="A8LM82"/>
<dbReference type="STRING" id="398580.Dshi_0310"/>
<dbReference type="KEGG" id="dsh:Dshi_0310"/>
<dbReference type="eggNOG" id="COG0203">
    <property type="taxonomic scope" value="Bacteria"/>
</dbReference>
<dbReference type="HOGENOM" id="CLU_074407_2_0_5"/>
<dbReference type="OrthoDB" id="9809073at2"/>
<dbReference type="Proteomes" id="UP000006833">
    <property type="component" value="Chromosome"/>
</dbReference>
<dbReference type="GO" id="GO:0022625">
    <property type="term" value="C:cytosolic large ribosomal subunit"/>
    <property type="evidence" value="ECO:0007669"/>
    <property type="project" value="TreeGrafter"/>
</dbReference>
<dbReference type="GO" id="GO:0003735">
    <property type="term" value="F:structural constituent of ribosome"/>
    <property type="evidence" value="ECO:0007669"/>
    <property type="project" value="InterPro"/>
</dbReference>
<dbReference type="GO" id="GO:0006412">
    <property type="term" value="P:translation"/>
    <property type="evidence" value="ECO:0007669"/>
    <property type="project" value="UniProtKB-UniRule"/>
</dbReference>
<dbReference type="FunFam" id="3.90.1030.10:FF:000001">
    <property type="entry name" value="50S ribosomal protein L17"/>
    <property type="match status" value="1"/>
</dbReference>
<dbReference type="Gene3D" id="3.90.1030.10">
    <property type="entry name" value="Ribosomal protein L17"/>
    <property type="match status" value="1"/>
</dbReference>
<dbReference type="HAMAP" id="MF_01368">
    <property type="entry name" value="Ribosomal_bL17"/>
    <property type="match status" value="1"/>
</dbReference>
<dbReference type="InterPro" id="IPR000456">
    <property type="entry name" value="Ribosomal_bL17"/>
</dbReference>
<dbReference type="InterPro" id="IPR047859">
    <property type="entry name" value="Ribosomal_bL17_CS"/>
</dbReference>
<dbReference type="InterPro" id="IPR036373">
    <property type="entry name" value="Ribosomal_bL17_sf"/>
</dbReference>
<dbReference type="NCBIfam" id="TIGR00059">
    <property type="entry name" value="L17"/>
    <property type="match status" value="1"/>
</dbReference>
<dbReference type="PANTHER" id="PTHR14413:SF16">
    <property type="entry name" value="LARGE RIBOSOMAL SUBUNIT PROTEIN BL17M"/>
    <property type="match status" value="1"/>
</dbReference>
<dbReference type="PANTHER" id="PTHR14413">
    <property type="entry name" value="RIBOSOMAL PROTEIN L17"/>
    <property type="match status" value="1"/>
</dbReference>
<dbReference type="Pfam" id="PF01196">
    <property type="entry name" value="Ribosomal_L17"/>
    <property type="match status" value="1"/>
</dbReference>
<dbReference type="SUPFAM" id="SSF64263">
    <property type="entry name" value="Prokaryotic ribosomal protein L17"/>
    <property type="match status" value="1"/>
</dbReference>
<dbReference type="PROSITE" id="PS01167">
    <property type="entry name" value="RIBOSOMAL_L17"/>
    <property type="match status" value="1"/>
</dbReference>
<reference key="1">
    <citation type="journal article" date="2010" name="ISME J.">
        <title>The complete genome sequence of the algal symbiont Dinoroseobacter shibae: a hitchhiker's guide to life in the sea.</title>
        <authorList>
            <person name="Wagner-Dobler I."/>
            <person name="Ballhausen B."/>
            <person name="Berger M."/>
            <person name="Brinkhoff T."/>
            <person name="Buchholz I."/>
            <person name="Bunk B."/>
            <person name="Cypionka H."/>
            <person name="Daniel R."/>
            <person name="Drepper T."/>
            <person name="Gerdts G."/>
            <person name="Hahnke S."/>
            <person name="Han C."/>
            <person name="Jahn D."/>
            <person name="Kalhoefer D."/>
            <person name="Kiss H."/>
            <person name="Klenk H.P."/>
            <person name="Kyrpides N."/>
            <person name="Liebl W."/>
            <person name="Liesegang H."/>
            <person name="Meincke L."/>
            <person name="Pati A."/>
            <person name="Petersen J."/>
            <person name="Piekarski T."/>
            <person name="Pommerenke C."/>
            <person name="Pradella S."/>
            <person name="Pukall R."/>
            <person name="Rabus R."/>
            <person name="Stackebrandt E."/>
            <person name="Thole S."/>
            <person name="Thompson L."/>
            <person name="Tielen P."/>
            <person name="Tomasch J."/>
            <person name="von Jan M."/>
            <person name="Wanphrut N."/>
            <person name="Wichels A."/>
            <person name="Zech H."/>
            <person name="Simon M."/>
        </authorList>
    </citation>
    <scope>NUCLEOTIDE SEQUENCE [LARGE SCALE GENOMIC DNA]</scope>
    <source>
        <strain>DSM 16493 / NCIMB 14021 / DFL 12</strain>
    </source>
</reference>
<keyword id="KW-1185">Reference proteome</keyword>
<keyword id="KW-0687">Ribonucleoprotein</keyword>
<keyword id="KW-0689">Ribosomal protein</keyword>
<sequence length="138" mass="15666">MRHARGYRRLNRTHEHRKALFANMAGSLIEHEQIKTTLPKAKELRPIVEKLITLAKRGDLHARRQAASQLKQHAYVAKLFDVLGPRYAERQGGYVRIMKAGFRYGDMAPMAIIEFVDRDVDAKGAADKAREAADEDAL</sequence>
<protein>
    <recommendedName>
        <fullName evidence="1">Large ribosomal subunit protein bL17</fullName>
    </recommendedName>
    <alternativeName>
        <fullName evidence="2">50S ribosomal protein L17</fullName>
    </alternativeName>
</protein>